<sequence>MAAKIRRDDEVIVLTGKDKGKRGKVKNVLSSGKVIVEGINLVKKHQKPVPALNQPGGIVEKEAAIQVSNVAIFNAATGKADRVGFRFEDGKKVRFFKSNSETIK</sequence>
<evidence type="ECO:0000255" key="1">
    <source>
        <dbReference type="HAMAP-Rule" id="MF_01326"/>
    </source>
</evidence>
<evidence type="ECO:0000305" key="2"/>
<feature type="chain" id="PRO_1000142033" description="Large ribosomal subunit protein uL24">
    <location>
        <begin position="1"/>
        <end position="104"/>
    </location>
</feature>
<comment type="function">
    <text evidence="1">One of two assembly initiator proteins, it binds directly to the 5'-end of the 23S rRNA, where it nucleates assembly of the 50S subunit.</text>
</comment>
<comment type="function">
    <text evidence="1">One of the proteins that surrounds the polypeptide exit tunnel on the outside of the subunit.</text>
</comment>
<comment type="subunit">
    <text evidence="1">Part of the 50S ribosomal subunit.</text>
</comment>
<comment type="similarity">
    <text evidence="1">Belongs to the universal ribosomal protein uL24 family.</text>
</comment>
<organism>
    <name type="scientific">Salmonella enteritidis PT4 (strain P125109)</name>
    <dbReference type="NCBI Taxonomy" id="550537"/>
    <lineage>
        <taxon>Bacteria</taxon>
        <taxon>Pseudomonadati</taxon>
        <taxon>Pseudomonadota</taxon>
        <taxon>Gammaproteobacteria</taxon>
        <taxon>Enterobacterales</taxon>
        <taxon>Enterobacteriaceae</taxon>
        <taxon>Salmonella</taxon>
    </lineage>
</organism>
<protein>
    <recommendedName>
        <fullName evidence="1">Large ribosomal subunit protein uL24</fullName>
    </recommendedName>
    <alternativeName>
        <fullName evidence="2">50S ribosomal protein L24</fullName>
    </alternativeName>
</protein>
<name>RL24_SALEP</name>
<gene>
    <name evidence="1" type="primary">rplX</name>
    <name type="ordered locus">SEN3257</name>
</gene>
<accession>B5R280</accession>
<keyword id="KW-0687">Ribonucleoprotein</keyword>
<keyword id="KW-0689">Ribosomal protein</keyword>
<keyword id="KW-0694">RNA-binding</keyword>
<keyword id="KW-0699">rRNA-binding</keyword>
<reference key="1">
    <citation type="journal article" date="2008" name="Genome Res.">
        <title>Comparative genome analysis of Salmonella enteritidis PT4 and Salmonella gallinarum 287/91 provides insights into evolutionary and host adaptation pathways.</title>
        <authorList>
            <person name="Thomson N.R."/>
            <person name="Clayton D.J."/>
            <person name="Windhorst D."/>
            <person name="Vernikos G."/>
            <person name="Davidson S."/>
            <person name="Churcher C."/>
            <person name="Quail M.A."/>
            <person name="Stevens M."/>
            <person name="Jones M.A."/>
            <person name="Watson M."/>
            <person name="Barron A."/>
            <person name="Layton A."/>
            <person name="Pickard D."/>
            <person name="Kingsley R.A."/>
            <person name="Bignell A."/>
            <person name="Clark L."/>
            <person name="Harris B."/>
            <person name="Ormond D."/>
            <person name="Abdellah Z."/>
            <person name="Brooks K."/>
            <person name="Cherevach I."/>
            <person name="Chillingworth T."/>
            <person name="Woodward J."/>
            <person name="Norberczak H."/>
            <person name="Lord A."/>
            <person name="Arrowsmith C."/>
            <person name="Jagels K."/>
            <person name="Moule S."/>
            <person name="Mungall K."/>
            <person name="Saunders M."/>
            <person name="Whitehead S."/>
            <person name="Chabalgoity J.A."/>
            <person name="Maskell D."/>
            <person name="Humphreys T."/>
            <person name="Roberts M."/>
            <person name="Barrow P.A."/>
            <person name="Dougan G."/>
            <person name="Parkhill J."/>
        </authorList>
    </citation>
    <scope>NUCLEOTIDE SEQUENCE [LARGE SCALE GENOMIC DNA]</scope>
    <source>
        <strain>P125109</strain>
    </source>
</reference>
<dbReference type="EMBL" id="AM933172">
    <property type="protein sequence ID" value="CAR34832.1"/>
    <property type="molecule type" value="Genomic_DNA"/>
</dbReference>
<dbReference type="RefSeq" id="WP_000729185.1">
    <property type="nucleotide sequence ID" value="NC_011294.1"/>
</dbReference>
<dbReference type="SMR" id="B5R280"/>
<dbReference type="GeneID" id="93778678"/>
<dbReference type="KEGG" id="set:SEN3257"/>
<dbReference type="HOGENOM" id="CLU_093315_2_2_6"/>
<dbReference type="Proteomes" id="UP000000613">
    <property type="component" value="Chromosome"/>
</dbReference>
<dbReference type="GO" id="GO:0005829">
    <property type="term" value="C:cytosol"/>
    <property type="evidence" value="ECO:0007669"/>
    <property type="project" value="UniProtKB-ARBA"/>
</dbReference>
<dbReference type="GO" id="GO:1990904">
    <property type="term" value="C:ribonucleoprotein complex"/>
    <property type="evidence" value="ECO:0007669"/>
    <property type="project" value="UniProtKB-KW"/>
</dbReference>
<dbReference type="GO" id="GO:0005840">
    <property type="term" value="C:ribosome"/>
    <property type="evidence" value="ECO:0007669"/>
    <property type="project" value="UniProtKB-KW"/>
</dbReference>
<dbReference type="GO" id="GO:0019843">
    <property type="term" value="F:rRNA binding"/>
    <property type="evidence" value="ECO:0007669"/>
    <property type="project" value="UniProtKB-UniRule"/>
</dbReference>
<dbReference type="GO" id="GO:0003735">
    <property type="term" value="F:structural constituent of ribosome"/>
    <property type="evidence" value="ECO:0007669"/>
    <property type="project" value="InterPro"/>
</dbReference>
<dbReference type="GO" id="GO:0006412">
    <property type="term" value="P:translation"/>
    <property type="evidence" value="ECO:0007669"/>
    <property type="project" value="UniProtKB-UniRule"/>
</dbReference>
<dbReference type="CDD" id="cd06089">
    <property type="entry name" value="KOW_RPL26"/>
    <property type="match status" value="1"/>
</dbReference>
<dbReference type="FunFam" id="2.30.30.30:FF:000004">
    <property type="entry name" value="50S ribosomal protein L24"/>
    <property type="match status" value="1"/>
</dbReference>
<dbReference type="Gene3D" id="2.30.30.30">
    <property type="match status" value="1"/>
</dbReference>
<dbReference type="HAMAP" id="MF_01326_B">
    <property type="entry name" value="Ribosomal_uL24_B"/>
    <property type="match status" value="1"/>
</dbReference>
<dbReference type="InterPro" id="IPR005824">
    <property type="entry name" value="KOW"/>
</dbReference>
<dbReference type="InterPro" id="IPR014722">
    <property type="entry name" value="Rib_uL2_dom2"/>
</dbReference>
<dbReference type="InterPro" id="IPR003256">
    <property type="entry name" value="Ribosomal_uL24"/>
</dbReference>
<dbReference type="InterPro" id="IPR005825">
    <property type="entry name" value="Ribosomal_uL24_CS"/>
</dbReference>
<dbReference type="InterPro" id="IPR041988">
    <property type="entry name" value="Ribosomal_uL24_KOW"/>
</dbReference>
<dbReference type="InterPro" id="IPR008991">
    <property type="entry name" value="Translation_prot_SH3-like_sf"/>
</dbReference>
<dbReference type="NCBIfam" id="TIGR01079">
    <property type="entry name" value="rplX_bact"/>
    <property type="match status" value="1"/>
</dbReference>
<dbReference type="PANTHER" id="PTHR12903">
    <property type="entry name" value="MITOCHONDRIAL RIBOSOMAL PROTEIN L24"/>
    <property type="match status" value="1"/>
</dbReference>
<dbReference type="Pfam" id="PF00467">
    <property type="entry name" value="KOW"/>
    <property type="match status" value="1"/>
</dbReference>
<dbReference type="Pfam" id="PF17136">
    <property type="entry name" value="ribosomal_L24"/>
    <property type="match status" value="1"/>
</dbReference>
<dbReference type="SMART" id="SM00739">
    <property type="entry name" value="KOW"/>
    <property type="match status" value="1"/>
</dbReference>
<dbReference type="SUPFAM" id="SSF50104">
    <property type="entry name" value="Translation proteins SH3-like domain"/>
    <property type="match status" value="1"/>
</dbReference>
<dbReference type="PROSITE" id="PS01108">
    <property type="entry name" value="RIBOSOMAL_L24"/>
    <property type="match status" value="1"/>
</dbReference>
<proteinExistence type="inferred from homology"/>